<protein>
    <recommendedName>
        <fullName>3-hydroxyisobutyryl-CoA hydrolase-like protein 3, mitochondrial</fullName>
        <ecNumber>3.1.2.-</ecNumber>
    </recommendedName>
</protein>
<accession>Q9T0K7</accession>
<gene>
    <name type="ordered locus">At4g13360</name>
    <name type="ORF">T9E8.100</name>
</gene>
<proteinExistence type="evidence at protein level"/>
<reference key="1">
    <citation type="journal article" date="1999" name="Nature">
        <title>Sequence and analysis of chromosome 4 of the plant Arabidopsis thaliana.</title>
        <authorList>
            <person name="Mayer K.F.X."/>
            <person name="Schueller C."/>
            <person name="Wambutt R."/>
            <person name="Murphy G."/>
            <person name="Volckaert G."/>
            <person name="Pohl T."/>
            <person name="Duesterhoeft A."/>
            <person name="Stiekema W."/>
            <person name="Entian K.-D."/>
            <person name="Terryn N."/>
            <person name="Harris B."/>
            <person name="Ansorge W."/>
            <person name="Brandt P."/>
            <person name="Grivell L.A."/>
            <person name="Rieger M."/>
            <person name="Weichselgartner M."/>
            <person name="de Simone V."/>
            <person name="Obermaier B."/>
            <person name="Mache R."/>
            <person name="Mueller M."/>
            <person name="Kreis M."/>
            <person name="Delseny M."/>
            <person name="Puigdomenech P."/>
            <person name="Watson M."/>
            <person name="Schmidtheini T."/>
            <person name="Reichert B."/>
            <person name="Portetelle D."/>
            <person name="Perez-Alonso M."/>
            <person name="Boutry M."/>
            <person name="Bancroft I."/>
            <person name="Vos P."/>
            <person name="Hoheisel J."/>
            <person name="Zimmermann W."/>
            <person name="Wedler H."/>
            <person name="Ridley P."/>
            <person name="Langham S.-A."/>
            <person name="McCullagh B."/>
            <person name="Bilham L."/>
            <person name="Robben J."/>
            <person name="van der Schueren J."/>
            <person name="Grymonprez B."/>
            <person name="Chuang Y.-J."/>
            <person name="Vandenbussche F."/>
            <person name="Braeken M."/>
            <person name="Weltjens I."/>
            <person name="Voet M."/>
            <person name="Bastiaens I."/>
            <person name="Aert R."/>
            <person name="Defoor E."/>
            <person name="Weitzenegger T."/>
            <person name="Bothe G."/>
            <person name="Ramsperger U."/>
            <person name="Hilbert H."/>
            <person name="Braun M."/>
            <person name="Holzer E."/>
            <person name="Brandt A."/>
            <person name="Peters S."/>
            <person name="van Staveren M."/>
            <person name="Dirkse W."/>
            <person name="Mooijman P."/>
            <person name="Klein Lankhorst R."/>
            <person name="Rose M."/>
            <person name="Hauf J."/>
            <person name="Koetter P."/>
            <person name="Berneiser S."/>
            <person name="Hempel S."/>
            <person name="Feldpausch M."/>
            <person name="Lamberth S."/>
            <person name="Van den Daele H."/>
            <person name="De Keyser A."/>
            <person name="Buysshaert C."/>
            <person name="Gielen J."/>
            <person name="Villarroel R."/>
            <person name="De Clercq R."/>
            <person name="van Montagu M."/>
            <person name="Rogers J."/>
            <person name="Cronin A."/>
            <person name="Quail M.A."/>
            <person name="Bray-Allen S."/>
            <person name="Clark L."/>
            <person name="Doggett J."/>
            <person name="Hall S."/>
            <person name="Kay M."/>
            <person name="Lennard N."/>
            <person name="McLay K."/>
            <person name="Mayes R."/>
            <person name="Pettett A."/>
            <person name="Rajandream M.A."/>
            <person name="Lyne M."/>
            <person name="Benes V."/>
            <person name="Rechmann S."/>
            <person name="Borkova D."/>
            <person name="Bloecker H."/>
            <person name="Scharfe M."/>
            <person name="Grimm M."/>
            <person name="Loehnert T.-H."/>
            <person name="Dose S."/>
            <person name="de Haan M."/>
            <person name="Maarse A.C."/>
            <person name="Schaefer M."/>
            <person name="Mueller-Auer S."/>
            <person name="Gabel C."/>
            <person name="Fuchs M."/>
            <person name="Fartmann B."/>
            <person name="Granderath K."/>
            <person name="Dauner D."/>
            <person name="Herzl A."/>
            <person name="Neumann S."/>
            <person name="Argiriou A."/>
            <person name="Vitale D."/>
            <person name="Liguori R."/>
            <person name="Piravandi E."/>
            <person name="Massenet O."/>
            <person name="Quigley F."/>
            <person name="Clabauld G."/>
            <person name="Muendlein A."/>
            <person name="Felber R."/>
            <person name="Schnabl S."/>
            <person name="Hiller R."/>
            <person name="Schmidt W."/>
            <person name="Lecharny A."/>
            <person name="Aubourg S."/>
            <person name="Chefdor F."/>
            <person name="Cooke R."/>
            <person name="Berger C."/>
            <person name="Monfort A."/>
            <person name="Casacuberta E."/>
            <person name="Gibbons T."/>
            <person name="Weber N."/>
            <person name="Vandenbol M."/>
            <person name="Bargues M."/>
            <person name="Terol J."/>
            <person name="Torres A."/>
            <person name="Perez-Perez A."/>
            <person name="Purnelle B."/>
            <person name="Bent E."/>
            <person name="Johnson S."/>
            <person name="Tacon D."/>
            <person name="Jesse T."/>
            <person name="Heijnen L."/>
            <person name="Schwarz S."/>
            <person name="Scholler P."/>
            <person name="Heber S."/>
            <person name="Francs P."/>
            <person name="Bielke C."/>
            <person name="Frishman D."/>
            <person name="Haase D."/>
            <person name="Lemcke K."/>
            <person name="Mewes H.-W."/>
            <person name="Stocker S."/>
            <person name="Zaccaria P."/>
            <person name="Bevan M."/>
            <person name="Wilson R.K."/>
            <person name="de la Bastide M."/>
            <person name="Habermann K."/>
            <person name="Parnell L."/>
            <person name="Dedhia N."/>
            <person name="Gnoj L."/>
            <person name="Schutz K."/>
            <person name="Huang E."/>
            <person name="Spiegel L."/>
            <person name="Sekhon M."/>
            <person name="Murray J."/>
            <person name="Sheet P."/>
            <person name="Cordes M."/>
            <person name="Abu-Threideh J."/>
            <person name="Stoneking T."/>
            <person name="Kalicki J."/>
            <person name="Graves T."/>
            <person name="Harmon G."/>
            <person name="Edwards J."/>
            <person name="Latreille P."/>
            <person name="Courtney L."/>
            <person name="Cloud J."/>
            <person name="Abbott A."/>
            <person name="Scott K."/>
            <person name="Johnson D."/>
            <person name="Minx P."/>
            <person name="Bentley D."/>
            <person name="Fulton B."/>
            <person name="Miller N."/>
            <person name="Greco T."/>
            <person name="Kemp K."/>
            <person name="Kramer J."/>
            <person name="Fulton L."/>
            <person name="Mardis E."/>
            <person name="Dante M."/>
            <person name="Pepin K."/>
            <person name="Hillier L.W."/>
            <person name="Nelson J."/>
            <person name="Spieth J."/>
            <person name="Ryan E."/>
            <person name="Andrews S."/>
            <person name="Geisel C."/>
            <person name="Layman D."/>
            <person name="Du H."/>
            <person name="Ali J."/>
            <person name="Berghoff A."/>
            <person name="Jones K."/>
            <person name="Drone K."/>
            <person name="Cotton M."/>
            <person name="Joshu C."/>
            <person name="Antonoiu B."/>
            <person name="Zidanic M."/>
            <person name="Strong C."/>
            <person name="Sun H."/>
            <person name="Lamar B."/>
            <person name="Yordan C."/>
            <person name="Ma P."/>
            <person name="Zhong J."/>
            <person name="Preston R."/>
            <person name="Vil D."/>
            <person name="Shekher M."/>
            <person name="Matero A."/>
            <person name="Shah R."/>
            <person name="Swaby I.K."/>
            <person name="O'Shaughnessy A."/>
            <person name="Rodriguez M."/>
            <person name="Hoffman J."/>
            <person name="Till S."/>
            <person name="Granat S."/>
            <person name="Shohdy N."/>
            <person name="Hasegawa A."/>
            <person name="Hameed A."/>
            <person name="Lodhi M."/>
            <person name="Johnson A."/>
            <person name="Chen E."/>
            <person name="Marra M.A."/>
            <person name="Martienssen R."/>
            <person name="McCombie W.R."/>
        </authorList>
    </citation>
    <scope>NUCLEOTIDE SEQUENCE [LARGE SCALE GENOMIC DNA]</scope>
    <source>
        <strain>cv. Columbia</strain>
    </source>
</reference>
<reference key="2">
    <citation type="journal article" date="2017" name="Plant J.">
        <title>Araport11: a complete reannotation of the Arabidopsis thaliana reference genome.</title>
        <authorList>
            <person name="Cheng C.Y."/>
            <person name="Krishnakumar V."/>
            <person name="Chan A.P."/>
            <person name="Thibaud-Nissen F."/>
            <person name="Schobel S."/>
            <person name="Town C.D."/>
        </authorList>
    </citation>
    <scope>GENOME REANNOTATION</scope>
    <source>
        <strain>cv. Columbia</strain>
    </source>
</reference>
<reference key="3">
    <citation type="submission" date="2002-03" db="EMBL/GenBank/DDBJ databases">
        <title>Full-length cDNA from Arabidopsis thaliana.</title>
        <authorList>
            <person name="Brover V.V."/>
            <person name="Troukhan M.E."/>
            <person name="Alexandrov N.A."/>
            <person name="Lu Y.-P."/>
            <person name="Flavell R.B."/>
            <person name="Feldmann K.A."/>
        </authorList>
    </citation>
    <scope>NUCLEOTIDE SEQUENCE [LARGE SCALE MRNA] OF 5-421</scope>
</reference>
<reference key="4">
    <citation type="journal article" date="2003" name="Science">
        <title>Empirical analysis of transcriptional activity in the Arabidopsis genome.</title>
        <authorList>
            <person name="Yamada K."/>
            <person name="Lim J."/>
            <person name="Dale J.M."/>
            <person name="Chen H."/>
            <person name="Shinn P."/>
            <person name="Palm C.J."/>
            <person name="Southwick A.M."/>
            <person name="Wu H.C."/>
            <person name="Kim C.J."/>
            <person name="Nguyen M."/>
            <person name="Pham P.K."/>
            <person name="Cheuk R.F."/>
            <person name="Karlin-Newmann G."/>
            <person name="Liu S.X."/>
            <person name="Lam B."/>
            <person name="Sakano H."/>
            <person name="Wu T."/>
            <person name="Yu G."/>
            <person name="Miranda M."/>
            <person name="Quach H.L."/>
            <person name="Tripp M."/>
            <person name="Chang C.H."/>
            <person name="Lee J.M."/>
            <person name="Toriumi M.J."/>
            <person name="Chan M.M."/>
            <person name="Tang C.C."/>
            <person name="Onodera C.S."/>
            <person name="Deng J.M."/>
            <person name="Akiyama K."/>
            <person name="Ansari Y."/>
            <person name="Arakawa T."/>
            <person name="Banh J."/>
            <person name="Banno F."/>
            <person name="Bowser L."/>
            <person name="Brooks S.Y."/>
            <person name="Carninci P."/>
            <person name="Chao Q."/>
            <person name="Choy N."/>
            <person name="Enju A."/>
            <person name="Goldsmith A.D."/>
            <person name="Gurjal M."/>
            <person name="Hansen N.F."/>
            <person name="Hayashizaki Y."/>
            <person name="Johnson-Hopson C."/>
            <person name="Hsuan V.W."/>
            <person name="Iida K."/>
            <person name="Karnes M."/>
            <person name="Khan S."/>
            <person name="Koesema E."/>
            <person name="Ishida J."/>
            <person name="Jiang P.X."/>
            <person name="Jones T."/>
            <person name="Kawai J."/>
            <person name="Kamiya A."/>
            <person name="Meyers C."/>
            <person name="Nakajima M."/>
            <person name="Narusaka M."/>
            <person name="Seki M."/>
            <person name="Sakurai T."/>
            <person name="Satou M."/>
            <person name="Tamse R."/>
            <person name="Vaysberg M."/>
            <person name="Wallender E.K."/>
            <person name="Wong C."/>
            <person name="Yamamura Y."/>
            <person name="Yuan S."/>
            <person name="Shinozaki K."/>
            <person name="Davis R.W."/>
            <person name="Theologis A."/>
            <person name="Ecker J.R."/>
        </authorList>
    </citation>
    <scope>NUCLEOTIDE SEQUENCE [LARGE SCALE MRNA] OF 8-421</scope>
    <source>
        <strain>cv. Columbia</strain>
    </source>
</reference>
<reference key="5">
    <citation type="journal article" date="2001" name="J. Biol. Chem.">
        <title>chy1, an Arabidopsis mutant with impaired beta-oxidation, is defective in a peroxisomal beta-hydroxyisobutyryl-CoA hydrolase.</title>
        <authorList>
            <person name="Zolman B.K."/>
            <person name="Monroe-Augustus M."/>
            <person name="Thompson B."/>
            <person name="Hawes J.W."/>
            <person name="Krukenberg K.A."/>
            <person name="Matsuda S.P."/>
            <person name="Bartel B."/>
        </authorList>
    </citation>
    <scope>GENE FAMILY</scope>
</reference>
<reference key="6">
    <citation type="journal article" date="2012" name="Mol. Cell. Proteomics">
        <title>Comparative large-scale characterisation of plant vs. mammal proteins reveals similar and idiosyncratic N-alpha acetylation features.</title>
        <authorList>
            <person name="Bienvenut W.V."/>
            <person name="Sumpton D."/>
            <person name="Martinez A."/>
            <person name="Lilla S."/>
            <person name="Espagne C."/>
            <person name="Meinnel T."/>
            <person name="Giglione C."/>
        </authorList>
    </citation>
    <scope>ACETYLATION [LARGE SCALE ANALYSIS] AT ALA-42</scope>
    <scope>CLEAVAGE OF TRANSIT PEPTIDE [LARGE SCALE ANALYSIS] AFTER MET-41</scope>
    <scope>IDENTIFICATION BY MASS SPECTROMETRY [LARGE SCALE ANALYSIS]</scope>
</reference>
<organism>
    <name type="scientific">Arabidopsis thaliana</name>
    <name type="common">Mouse-ear cress</name>
    <dbReference type="NCBI Taxonomy" id="3702"/>
    <lineage>
        <taxon>Eukaryota</taxon>
        <taxon>Viridiplantae</taxon>
        <taxon>Streptophyta</taxon>
        <taxon>Embryophyta</taxon>
        <taxon>Tracheophyta</taxon>
        <taxon>Spermatophyta</taxon>
        <taxon>Magnoliopsida</taxon>
        <taxon>eudicotyledons</taxon>
        <taxon>Gunneridae</taxon>
        <taxon>Pentapetalae</taxon>
        <taxon>rosids</taxon>
        <taxon>malvids</taxon>
        <taxon>Brassicales</taxon>
        <taxon>Brassicaceae</taxon>
        <taxon>Camelineae</taxon>
        <taxon>Arabidopsis</taxon>
    </lineage>
</organism>
<name>HIBC6_ARATH</name>
<dbReference type="EC" id="3.1.2.-"/>
<dbReference type="EMBL" id="AL049608">
    <property type="protein sequence ID" value="CAB40771.1"/>
    <property type="status" value="ALT_INIT"/>
    <property type="molecule type" value="Genomic_DNA"/>
</dbReference>
<dbReference type="EMBL" id="AL161536">
    <property type="protein sequence ID" value="CAB78378.1"/>
    <property type="status" value="ALT_INIT"/>
    <property type="molecule type" value="Genomic_DNA"/>
</dbReference>
<dbReference type="EMBL" id="CP002687">
    <property type="protein sequence ID" value="AEE83270.1"/>
    <property type="molecule type" value="Genomic_DNA"/>
</dbReference>
<dbReference type="EMBL" id="AY084255">
    <property type="protein sequence ID" value="AAM60849.1"/>
    <property type="status" value="ALT_INIT"/>
    <property type="molecule type" value="mRNA"/>
</dbReference>
<dbReference type="EMBL" id="AF380642">
    <property type="protein sequence ID" value="AAK55723.1"/>
    <property type="status" value="ALT_INIT"/>
    <property type="molecule type" value="mRNA"/>
</dbReference>
<dbReference type="EMBL" id="AY057737">
    <property type="protein sequence ID" value="AAL15367.1"/>
    <property type="molecule type" value="mRNA"/>
</dbReference>
<dbReference type="PIR" id="T06293">
    <property type="entry name" value="T06293"/>
</dbReference>
<dbReference type="RefSeq" id="NP_193072.2">
    <property type="nucleotide sequence ID" value="NM_117410.7"/>
</dbReference>
<dbReference type="SMR" id="Q9T0K7"/>
<dbReference type="BioGRID" id="12264">
    <property type="interactions" value="1"/>
</dbReference>
<dbReference type="FunCoup" id="Q9T0K7">
    <property type="interactions" value="1252"/>
</dbReference>
<dbReference type="STRING" id="3702.Q9T0K7"/>
<dbReference type="iPTMnet" id="Q9T0K7"/>
<dbReference type="PaxDb" id="3702-AT4G13360.1"/>
<dbReference type="ProteomicsDB" id="230325"/>
<dbReference type="EnsemblPlants" id="AT4G13360.1">
    <property type="protein sequence ID" value="AT4G13360.1"/>
    <property type="gene ID" value="AT4G13360"/>
</dbReference>
<dbReference type="GeneID" id="826967"/>
<dbReference type="Gramene" id="AT4G13360.1">
    <property type="protein sequence ID" value="AT4G13360.1"/>
    <property type="gene ID" value="AT4G13360"/>
</dbReference>
<dbReference type="KEGG" id="ath:AT4G13360"/>
<dbReference type="Araport" id="AT4G13360"/>
<dbReference type="TAIR" id="AT4G13360"/>
<dbReference type="eggNOG" id="KOG1684">
    <property type="taxonomic scope" value="Eukaryota"/>
</dbReference>
<dbReference type="HOGENOM" id="CLU_009834_22_1_1"/>
<dbReference type="InParanoid" id="Q9T0K7"/>
<dbReference type="OMA" id="AYRNNEH"/>
<dbReference type="BioCyc" id="ARA:AT4G13360-MONOMER"/>
<dbReference type="PRO" id="PR:Q9T0K7"/>
<dbReference type="Proteomes" id="UP000006548">
    <property type="component" value="Chromosome 4"/>
</dbReference>
<dbReference type="ExpressionAtlas" id="Q9T0K7">
    <property type="expression patterns" value="baseline and differential"/>
</dbReference>
<dbReference type="GO" id="GO:0005829">
    <property type="term" value="C:cytosol"/>
    <property type="evidence" value="ECO:0007005"/>
    <property type="project" value="TAIR"/>
</dbReference>
<dbReference type="GO" id="GO:0005739">
    <property type="term" value="C:mitochondrion"/>
    <property type="evidence" value="ECO:0007669"/>
    <property type="project" value="UniProtKB-SubCell"/>
</dbReference>
<dbReference type="GO" id="GO:0003860">
    <property type="term" value="F:3-hydroxyisobutyryl-CoA hydrolase activity"/>
    <property type="evidence" value="ECO:0007669"/>
    <property type="project" value="InterPro"/>
</dbReference>
<dbReference type="CDD" id="cd06558">
    <property type="entry name" value="crotonase-like"/>
    <property type="match status" value="1"/>
</dbReference>
<dbReference type="FunFam" id="3.90.226.10:FF:000062">
    <property type="entry name" value="3-hydroxyisobutyryl-CoA hydrolase-like protein 3 mitochondrial"/>
    <property type="match status" value="1"/>
</dbReference>
<dbReference type="Gene3D" id="3.90.226.10">
    <property type="entry name" value="2-enoyl-CoA Hydratase, Chain A, domain 1"/>
    <property type="match status" value="1"/>
</dbReference>
<dbReference type="InterPro" id="IPR029045">
    <property type="entry name" value="ClpP/crotonase-like_dom_sf"/>
</dbReference>
<dbReference type="InterPro" id="IPR045004">
    <property type="entry name" value="ECH_dom"/>
</dbReference>
<dbReference type="InterPro" id="IPR032259">
    <property type="entry name" value="HIBYL-CoA-H"/>
</dbReference>
<dbReference type="NCBIfam" id="NF004127">
    <property type="entry name" value="PRK05617.1"/>
    <property type="match status" value="1"/>
</dbReference>
<dbReference type="PANTHER" id="PTHR43176:SF16">
    <property type="entry name" value="3-HYDROXYISOBUTYRYL-COA HYDROLASE-LIKE PROTEIN 3, MITOCHONDRIAL"/>
    <property type="match status" value="1"/>
</dbReference>
<dbReference type="PANTHER" id="PTHR43176">
    <property type="entry name" value="3-HYDROXYISOBUTYRYL-COA HYDROLASE-RELATED"/>
    <property type="match status" value="1"/>
</dbReference>
<dbReference type="Pfam" id="PF16113">
    <property type="entry name" value="ECH_2"/>
    <property type="match status" value="1"/>
</dbReference>
<dbReference type="SUPFAM" id="SSF52096">
    <property type="entry name" value="ClpP/crotonase"/>
    <property type="match status" value="1"/>
</dbReference>
<keyword id="KW-0007">Acetylation</keyword>
<keyword id="KW-0378">Hydrolase</keyword>
<keyword id="KW-0496">Mitochondrion</keyword>
<keyword id="KW-1185">Reference proteome</keyword>
<keyword id="KW-0809">Transit peptide</keyword>
<feature type="transit peptide" description="Mitochondrion" evidence="2">
    <location>
        <begin position="1"/>
        <end position="41"/>
    </location>
</feature>
<feature type="chain" id="PRO_0000392982" description="3-hydroxyisobutyryl-CoA hydrolase-like protein 3, mitochondrial">
    <location>
        <begin position="42"/>
        <end position="421"/>
    </location>
</feature>
<feature type="modified residue" description="N-acetylalanine" evidence="2">
    <location>
        <position position="42"/>
    </location>
</feature>
<evidence type="ECO:0000305" key="1"/>
<evidence type="ECO:0007744" key="2">
    <source>
    </source>
</evidence>
<comment type="subcellular location">
    <subcellularLocation>
        <location evidence="1">Mitochondrion</location>
    </subcellularLocation>
</comment>
<comment type="similarity">
    <text evidence="1">Belongs to the enoyl-CoA hydratase/isomerase family.</text>
</comment>
<comment type="sequence caution" evidence="1">
    <conflict type="erroneous initiation">
        <sequence resource="EMBL-CDS" id="AAK55723"/>
    </conflict>
    <text>Truncated N-terminus.</text>
</comment>
<comment type="sequence caution" evidence="1">
    <conflict type="erroneous initiation">
        <sequence resource="EMBL-CDS" id="AAM60849"/>
    </conflict>
    <text>Truncated N-terminus.</text>
</comment>
<comment type="sequence caution" evidence="1">
    <conflict type="erroneous initiation">
        <sequence resource="EMBL-CDS" id="CAB40771"/>
    </conflict>
    <text>Truncated N-terminus.</text>
</comment>
<comment type="sequence caution" evidence="1">
    <conflict type="erroneous initiation">
        <sequence resource="EMBL-CDS" id="CAB78378"/>
    </conflict>
    <text>Truncated N-terminus.</text>
</comment>
<sequence length="421" mass="46251">MIIIKTLSHRIFFPKFSQTFSSQFHQTLRFSISDRRKFSAMAGAGVDDFVKGNVFPNGVALITLDRTKALNAMNLDMDIKYKSFLDEWESDPRVKCVIVEGSTSRAFCAGMDIKGVAAEIQKDKNTPLVQKVFTAEYTLICAIAAYKKPYISLMDGITMGFGLGLSGHGRYRVITERTVLAMPENGIGLFPDVGFSYIAAHSPGGGSVGAYLGLTGKRISAPSDALFVGLGTHYVPSEKLASLKEAILSANLSEDPNQDIQATLSKYSSNPESEAHLKSLLPHIESAFSSNKSIKETIEELKKYQQSTESSVVEWANEALKGLEKGAPFSLYLTQKYFSNVACAKSKPENELATLNGVMKTEYRIALRSALRGDFAEGVRAVLIDKDQNPKWNPTSIEEVDENEVEALFKPLSPEVEELKV</sequence>